<name>MED14_NEOFI</name>
<comment type="function">
    <text evidence="1">Component of the Mediator complex, a coactivator involved in the regulated transcription of nearly all RNA polymerase II-dependent genes. Mediator functions as a bridge to convey information from gene-specific regulatory proteins to the basal RNA polymerase II transcription machinery. Mediator is recruited to promoters by direct interactions with regulatory proteins and serves as a scaffold for the assembly of a functional preinitiation complex with RNA polymerase II and the general transcription factors (By similarity).</text>
</comment>
<comment type="subunit">
    <text evidence="1">Component of the Mediator complex.</text>
</comment>
<comment type="subcellular location">
    <subcellularLocation>
        <location evidence="3">Nucleus</location>
    </subcellularLocation>
</comment>
<comment type="similarity">
    <text evidence="3">Belongs to the Mediator complex subunit 14 family.</text>
</comment>
<evidence type="ECO:0000250" key="1"/>
<evidence type="ECO:0000256" key="2">
    <source>
        <dbReference type="SAM" id="MobiDB-lite"/>
    </source>
</evidence>
<evidence type="ECO:0000305" key="3"/>
<proteinExistence type="inferred from homology"/>
<keyword id="KW-0010">Activator</keyword>
<keyword id="KW-0539">Nucleus</keyword>
<keyword id="KW-1185">Reference proteome</keyword>
<keyword id="KW-0804">Transcription</keyword>
<keyword id="KW-0805">Transcription regulation</keyword>
<feature type="chain" id="PRO_0000304605" description="Mediator of RNA polymerase II transcription subunit 14">
    <location>
        <begin position="1"/>
        <end position="1093"/>
    </location>
</feature>
<feature type="region of interest" description="Disordered" evidence="2">
    <location>
        <begin position="1"/>
        <end position="61"/>
    </location>
</feature>
<feature type="region of interest" description="Disordered" evidence="2">
    <location>
        <begin position="1035"/>
        <end position="1060"/>
    </location>
</feature>
<feature type="compositionally biased region" description="Polar residues" evidence="2">
    <location>
        <begin position="19"/>
        <end position="31"/>
    </location>
</feature>
<feature type="compositionally biased region" description="Basic and acidic residues" evidence="2">
    <location>
        <begin position="41"/>
        <end position="61"/>
    </location>
</feature>
<feature type="compositionally biased region" description="Polar residues" evidence="2">
    <location>
        <begin position="1040"/>
        <end position="1056"/>
    </location>
</feature>
<gene>
    <name type="primary">rgr1</name>
    <name type="synonym">med14</name>
    <name type="ORF">NFIA_082960</name>
</gene>
<reference key="1">
    <citation type="journal article" date="2008" name="PLoS Genet.">
        <title>Genomic islands in the pathogenic filamentous fungus Aspergillus fumigatus.</title>
        <authorList>
            <person name="Fedorova N.D."/>
            <person name="Khaldi N."/>
            <person name="Joardar V.S."/>
            <person name="Maiti R."/>
            <person name="Amedeo P."/>
            <person name="Anderson M.J."/>
            <person name="Crabtree J."/>
            <person name="Silva J.C."/>
            <person name="Badger J.H."/>
            <person name="Albarraq A."/>
            <person name="Angiuoli S."/>
            <person name="Bussey H."/>
            <person name="Bowyer P."/>
            <person name="Cotty P.J."/>
            <person name="Dyer P.S."/>
            <person name="Egan A."/>
            <person name="Galens K."/>
            <person name="Fraser-Liggett C.M."/>
            <person name="Haas B.J."/>
            <person name="Inman J.M."/>
            <person name="Kent R."/>
            <person name="Lemieux S."/>
            <person name="Malavazi I."/>
            <person name="Orvis J."/>
            <person name="Roemer T."/>
            <person name="Ronning C.M."/>
            <person name="Sundaram J.P."/>
            <person name="Sutton G."/>
            <person name="Turner G."/>
            <person name="Venter J.C."/>
            <person name="White O.R."/>
            <person name="Whitty B.R."/>
            <person name="Youngman P."/>
            <person name="Wolfe K.H."/>
            <person name="Goldman G.H."/>
            <person name="Wortman J.R."/>
            <person name="Jiang B."/>
            <person name="Denning D.W."/>
            <person name="Nierman W.C."/>
        </authorList>
    </citation>
    <scope>NUCLEOTIDE SEQUENCE [LARGE SCALE GENOMIC DNA]</scope>
    <source>
        <strain>ATCC 1020 / DSM 3700 / CBS 544.65 / FGSC A1164 / JCM 1740 / NRRL 181 / WB 181</strain>
    </source>
</reference>
<dbReference type="EMBL" id="DS027696">
    <property type="protein sequence ID" value="EAW18345.1"/>
    <property type="molecule type" value="Genomic_DNA"/>
</dbReference>
<dbReference type="RefSeq" id="XP_001260242.1">
    <property type="nucleotide sequence ID" value="XM_001260241.1"/>
</dbReference>
<dbReference type="STRING" id="331117.A1DG38"/>
<dbReference type="EnsemblFungi" id="EAW18345">
    <property type="protein sequence ID" value="EAW18345"/>
    <property type="gene ID" value="NFIA_082960"/>
</dbReference>
<dbReference type="GeneID" id="4586799"/>
<dbReference type="KEGG" id="nfi:NFIA_082960"/>
<dbReference type="VEuPathDB" id="FungiDB:NFIA_082960"/>
<dbReference type="eggNOG" id="KOG1875">
    <property type="taxonomic scope" value="Eukaryota"/>
</dbReference>
<dbReference type="HOGENOM" id="CLU_003573_1_1_1"/>
<dbReference type="OMA" id="ITQGYIP"/>
<dbReference type="OrthoDB" id="205099at2759"/>
<dbReference type="Proteomes" id="UP000006702">
    <property type="component" value="Unassembled WGS sequence"/>
</dbReference>
<dbReference type="GO" id="GO:0070847">
    <property type="term" value="C:core mediator complex"/>
    <property type="evidence" value="ECO:0007669"/>
    <property type="project" value="TreeGrafter"/>
</dbReference>
<dbReference type="GO" id="GO:0016592">
    <property type="term" value="C:mediator complex"/>
    <property type="evidence" value="ECO:0007669"/>
    <property type="project" value="InterPro"/>
</dbReference>
<dbReference type="GO" id="GO:0003712">
    <property type="term" value="F:transcription coregulator activity"/>
    <property type="evidence" value="ECO:0007669"/>
    <property type="project" value="InterPro"/>
</dbReference>
<dbReference type="GO" id="GO:0006357">
    <property type="term" value="P:regulation of transcription by RNA polymerase II"/>
    <property type="evidence" value="ECO:0007669"/>
    <property type="project" value="InterPro"/>
</dbReference>
<dbReference type="InterPro" id="IPR055122">
    <property type="entry name" value="Med14_N"/>
</dbReference>
<dbReference type="InterPro" id="IPR013947">
    <property type="entry name" value="Mediator_Med14"/>
</dbReference>
<dbReference type="PANTHER" id="PTHR12809">
    <property type="entry name" value="MEDIATOR COMPLEX SUBUNIT"/>
    <property type="match status" value="1"/>
</dbReference>
<dbReference type="PANTHER" id="PTHR12809:SF2">
    <property type="entry name" value="MEDIATOR OF RNA POLYMERASE II TRANSCRIPTION SUBUNIT 14"/>
    <property type="match status" value="1"/>
</dbReference>
<dbReference type="Pfam" id="PF08638">
    <property type="entry name" value="Med14"/>
    <property type="match status" value="1"/>
</dbReference>
<accession>A1DG38</accession>
<protein>
    <recommendedName>
        <fullName>Mediator of RNA polymerase II transcription subunit 14</fullName>
    </recommendedName>
    <alternativeName>
        <fullName>Mediator complex subunit 14</fullName>
    </alternativeName>
</protein>
<organism>
    <name type="scientific">Neosartorya fischeri (strain ATCC 1020 / DSM 3700 / CBS 544.65 / FGSC A1164 / JCM 1740 / NRRL 181 / WB 181)</name>
    <name type="common">Aspergillus fischerianus</name>
    <dbReference type="NCBI Taxonomy" id="331117"/>
    <lineage>
        <taxon>Eukaryota</taxon>
        <taxon>Fungi</taxon>
        <taxon>Dikarya</taxon>
        <taxon>Ascomycota</taxon>
        <taxon>Pezizomycotina</taxon>
        <taxon>Eurotiomycetes</taxon>
        <taxon>Eurotiomycetidae</taxon>
        <taxon>Eurotiales</taxon>
        <taxon>Aspergillaceae</taxon>
        <taxon>Aspergillus</taxon>
        <taxon>Aspergillus subgen. Fumigati</taxon>
    </lineage>
</organism>
<sequence>MPGVIMDNATVGRLGHAPDTQTPSNGDNLRNGSLHINGAAKGDKDHDPDKESYTGKPKIDGHRALPELPHITQGFFPFSTLVNRYVQQCWNELSDLITELAAIQVSPHSSMPLLPANGKSPGNQSPENVQKKLRILDFAHAKRAEFIKLLVLSQWSRRAHDVSKLIDLQNFIRSRHQAFVDALQRVGEMKRDLVQAQVANPDLQTALEILSKGRLESLADLGYKSSKLLTARGALKRLHRINRIISARLALHDSIPHPFRTYRVHDGRVTFVVRGEFELDLSVGAESELSQFFFVDIRFLYSPSSNIPNGRMSNEIDAKINDKLRDSGLTGCFNFLHGLVLTNKIHILFKQAIELAKGLWSETLRVELLHRTLVIQYWALKPGPKSWVEIGVKSGNGDADSQGVGVPCLGLRWMRDGQEVDSRDIEFDPEDLSMECLLRSVIALHISYLLSSAYGILSEYSLFSTGTLSSQAILNVTEPGECQLSVQLTGSRHLRVSIEPMSGAVTLSATPGLSERSESDASLDRSTIDDLVARVSRLRCIAAIEELESNVRILGFETVSPKGLRNEIRTVFPANVLRFSLFWHPSWERNWVVAATSSITGDNWWVVQLRRSSEVATDFSVSDTSVPLCSGHSMSDTFLATSHQTRSSSFPDLGYCLSGMVAIYANVSYLSDLQSVEFHPPLCALKVESDLQIPDIFIRYQVSKLPRALQLVLPAGLKRKNLLKDTVRLAFHGIDRHKNSAIFVAYGNLVGPWTDLCTLVSKSDSSLVFKRGGSGFALRLLAPAGRPVIVQLFKSLQTLECTLSILDFLRQRRLTPQSLSLTHIAFAYGPRRDLSAIIGIGLSEVPSSAELDPVRILARTDPLLFLTLGIRFKHPNPHRRVQGSLAAILNHASNEAGLDFVTEILSFTLPLMRALEQITSNASRQESFRLQVIVRNACTFLLHYTYQGFRFQLTTSQHSGQLTWVLRELSSPGAGPGHDQLKARLRGTLYHSNGNGWKGLGNGVVADVEGVSNVIWALDGCFTGAQHNTWLPRETKSDQDYSTQPVPEKQSQTGAPSQAAMANDTTITANFVNDKSLQRNPVASNAADVITID</sequence>